<reference key="1">
    <citation type="journal article" date="2003" name="Lancet">
        <title>Genome sequence of Vibrio parahaemolyticus: a pathogenic mechanism distinct from that of V. cholerae.</title>
        <authorList>
            <person name="Makino K."/>
            <person name="Oshima K."/>
            <person name="Kurokawa K."/>
            <person name="Yokoyama K."/>
            <person name="Uda T."/>
            <person name="Tagomori K."/>
            <person name="Iijima Y."/>
            <person name="Najima M."/>
            <person name="Nakano M."/>
            <person name="Yamashita A."/>
            <person name="Kubota Y."/>
            <person name="Kimura S."/>
            <person name="Yasunaga T."/>
            <person name="Honda T."/>
            <person name="Shinagawa H."/>
            <person name="Hattori M."/>
            <person name="Iida T."/>
        </authorList>
    </citation>
    <scope>NUCLEOTIDE SEQUENCE [LARGE SCALE GENOMIC DNA]</scope>
    <source>
        <strain>RIMD 2210633</strain>
    </source>
</reference>
<evidence type="ECO:0000255" key="1">
    <source>
        <dbReference type="HAMAP-Rule" id="MF_01033"/>
    </source>
</evidence>
<gene>
    <name evidence="1" type="primary">leuB</name>
    <name type="ordered locus">VP0344</name>
</gene>
<accession>Q87SS8</accession>
<feature type="chain" id="PRO_0000083780" description="3-isopropylmalate dehydrogenase">
    <location>
        <begin position="1"/>
        <end position="363"/>
    </location>
</feature>
<feature type="binding site" evidence="1">
    <location>
        <begin position="79"/>
        <end position="92"/>
    </location>
    <ligand>
        <name>NAD(+)</name>
        <dbReference type="ChEBI" id="CHEBI:57540"/>
    </ligand>
</feature>
<feature type="binding site" evidence="1">
    <location>
        <position position="100"/>
    </location>
    <ligand>
        <name>substrate</name>
    </ligand>
</feature>
<feature type="binding site" evidence="1">
    <location>
        <position position="110"/>
    </location>
    <ligand>
        <name>substrate</name>
    </ligand>
</feature>
<feature type="binding site" evidence="1">
    <location>
        <position position="139"/>
    </location>
    <ligand>
        <name>substrate</name>
    </ligand>
</feature>
<feature type="binding site" evidence="1">
    <location>
        <position position="228"/>
    </location>
    <ligand>
        <name>Mg(2+)</name>
        <dbReference type="ChEBI" id="CHEBI:18420"/>
    </ligand>
</feature>
<feature type="binding site" evidence="1">
    <location>
        <position position="228"/>
    </location>
    <ligand>
        <name>substrate</name>
    </ligand>
</feature>
<feature type="binding site" evidence="1">
    <location>
        <position position="252"/>
    </location>
    <ligand>
        <name>Mg(2+)</name>
        <dbReference type="ChEBI" id="CHEBI:18420"/>
    </ligand>
</feature>
<feature type="binding site" evidence="1">
    <location>
        <position position="256"/>
    </location>
    <ligand>
        <name>Mg(2+)</name>
        <dbReference type="ChEBI" id="CHEBI:18420"/>
    </ligand>
</feature>
<feature type="binding site" evidence="1">
    <location>
        <begin position="286"/>
        <end position="298"/>
    </location>
    <ligand>
        <name>NAD(+)</name>
        <dbReference type="ChEBI" id="CHEBI:57540"/>
    </ligand>
</feature>
<feature type="site" description="Important for catalysis" evidence="1">
    <location>
        <position position="146"/>
    </location>
</feature>
<feature type="site" description="Important for catalysis" evidence="1">
    <location>
        <position position="196"/>
    </location>
</feature>
<dbReference type="EC" id="1.1.1.85" evidence="1"/>
<dbReference type="EMBL" id="BA000031">
    <property type="protein sequence ID" value="BAC58607.1"/>
    <property type="molecule type" value="Genomic_DNA"/>
</dbReference>
<dbReference type="RefSeq" id="NP_796723.1">
    <property type="nucleotide sequence ID" value="NC_004603.1"/>
</dbReference>
<dbReference type="RefSeq" id="WP_005459506.1">
    <property type="nucleotide sequence ID" value="NC_004603.1"/>
</dbReference>
<dbReference type="SMR" id="Q87SS8"/>
<dbReference type="GeneID" id="1187811"/>
<dbReference type="KEGG" id="vpa:VP0344"/>
<dbReference type="PATRIC" id="fig|223926.6.peg.331"/>
<dbReference type="eggNOG" id="COG0473">
    <property type="taxonomic scope" value="Bacteria"/>
</dbReference>
<dbReference type="HOGENOM" id="CLU_031953_0_3_6"/>
<dbReference type="UniPathway" id="UPA00048">
    <property type="reaction ID" value="UER00072"/>
</dbReference>
<dbReference type="Proteomes" id="UP000002493">
    <property type="component" value="Chromosome 1"/>
</dbReference>
<dbReference type="GO" id="GO:0005829">
    <property type="term" value="C:cytosol"/>
    <property type="evidence" value="ECO:0007669"/>
    <property type="project" value="TreeGrafter"/>
</dbReference>
<dbReference type="GO" id="GO:0003862">
    <property type="term" value="F:3-isopropylmalate dehydrogenase activity"/>
    <property type="evidence" value="ECO:0007669"/>
    <property type="project" value="UniProtKB-UniRule"/>
</dbReference>
<dbReference type="GO" id="GO:0000287">
    <property type="term" value="F:magnesium ion binding"/>
    <property type="evidence" value="ECO:0007669"/>
    <property type="project" value="InterPro"/>
</dbReference>
<dbReference type="GO" id="GO:0051287">
    <property type="term" value="F:NAD binding"/>
    <property type="evidence" value="ECO:0007669"/>
    <property type="project" value="InterPro"/>
</dbReference>
<dbReference type="GO" id="GO:0009098">
    <property type="term" value="P:L-leucine biosynthetic process"/>
    <property type="evidence" value="ECO:0007669"/>
    <property type="project" value="UniProtKB-UniRule"/>
</dbReference>
<dbReference type="FunFam" id="3.40.718.10:FF:000004">
    <property type="entry name" value="3-isopropylmalate dehydrogenase"/>
    <property type="match status" value="1"/>
</dbReference>
<dbReference type="Gene3D" id="3.40.718.10">
    <property type="entry name" value="Isopropylmalate Dehydrogenase"/>
    <property type="match status" value="1"/>
</dbReference>
<dbReference type="HAMAP" id="MF_01033">
    <property type="entry name" value="LeuB_type1"/>
    <property type="match status" value="1"/>
</dbReference>
<dbReference type="InterPro" id="IPR019818">
    <property type="entry name" value="IsoCit/isopropylmalate_DH_CS"/>
</dbReference>
<dbReference type="InterPro" id="IPR024084">
    <property type="entry name" value="IsoPropMal-DH-like_dom"/>
</dbReference>
<dbReference type="InterPro" id="IPR004429">
    <property type="entry name" value="Isopropylmalate_DH"/>
</dbReference>
<dbReference type="NCBIfam" id="TIGR00169">
    <property type="entry name" value="leuB"/>
    <property type="match status" value="1"/>
</dbReference>
<dbReference type="PANTHER" id="PTHR42979">
    <property type="entry name" value="3-ISOPROPYLMALATE DEHYDROGENASE"/>
    <property type="match status" value="1"/>
</dbReference>
<dbReference type="PANTHER" id="PTHR42979:SF1">
    <property type="entry name" value="3-ISOPROPYLMALATE DEHYDROGENASE"/>
    <property type="match status" value="1"/>
</dbReference>
<dbReference type="Pfam" id="PF00180">
    <property type="entry name" value="Iso_dh"/>
    <property type="match status" value="1"/>
</dbReference>
<dbReference type="SMART" id="SM01329">
    <property type="entry name" value="Iso_dh"/>
    <property type="match status" value="1"/>
</dbReference>
<dbReference type="SUPFAM" id="SSF53659">
    <property type="entry name" value="Isocitrate/Isopropylmalate dehydrogenase-like"/>
    <property type="match status" value="1"/>
</dbReference>
<dbReference type="PROSITE" id="PS00470">
    <property type="entry name" value="IDH_IMDH"/>
    <property type="match status" value="1"/>
</dbReference>
<comment type="function">
    <text evidence="1">Catalyzes the oxidation of 3-carboxy-2-hydroxy-4-methylpentanoate (3-isopropylmalate) to 3-carboxy-4-methyl-2-oxopentanoate. The product decarboxylates to 4-methyl-2 oxopentanoate.</text>
</comment>
<comment type="catalytic activity">
    <reaction evidence="1">
        <text>(2R,3S)-3-isopropylmalate + NAD(+) = 4-methyl-2-oxopentanoate + CO2 + NADH</text>
        <dbReference type="Rhea" id="RHEA:32271"/>
        <dbReference type="ChEBI" id="CHEBI:16526"/>
        <dbReference type="ChEBI" id="CHEBI:17865"/>
        <dbReference type="ChEBI" id="CHEBI:35121"/>
        <dbReference type="ChEBI" id="CHEBI:57540"/>
        <dbReference type="ChEBI" id="CHEBI:57945"/>
        <dbReference type="EC" id="1.1.1.85"/>
    </reaction>
</comment>
<comment type="cofactor">
    <cofactor evidence="1">
        <name>Mg(2+)</name>
        <dbReference type="ChEBI" id="CHEBI:18420"/>
    </cofactor>
    <cofactor evidence="1">
        <name>Mn(2+)</name>
        <dbReference type="ChEBI" id="CHEBI:29035"/>
    </cofactor>
    <text evidence="1">Binds 1 Mg(2+) or Mn(2+) ion per subunit.</text>
</comment>
<comment type="pathway">
    <text evidence="1">Amino-acid biosynthesis; L-leucine biosynthesis; L-leucine from 3-methyl-2-oxobutanoate: step 3/4.</text>
</comment>
<comment type="subunit">
    <text evidence="1">Homodimer.</text>
</comment>
<comment type="subcellular location">
    <subcellularLocation>
        <location evidence="1">Cytoplasm</location>
    </subcellularLocation>
</comment>
<comment type="similarity">
    <text evidence="1">Belongs to the isocitrate and isopropylmalate dehydrogenases family. LeuB type 1 subfamily.</text>
</comment>
<sequence length="363" mass="39334">MTDKSYKIAVLPGDGIGPEVMAQAHKVLDAIEQKHGISFEREEHDVGGIAIDNHGCPLPESTVTACEESDAVLFGSVGGPKWEHLPPNDQPERGALLPLRKHFQLFCNLRPAQIHAGLEAFSPLRADISGRGFDIVVVRELTGGIYFGQPKGREGEGANEKAFDTEVYHRYEIERIAKIAFESARLRRKKVCSIDKANVLQSSILWREVVEEIAKDYPDVELSHMYIDNATMQLIKDPAQFDVMLCSNIFGDIISDECAMITGSMGMLPSASLNESKFGLYEPAGGSAPDIAGKNIANPVAQILSAALMLRYSLGEEAAAQDIESAVSKALSAGELTADLASDKPALTTSEMGDKIAEYILNS</sequence>
<organism>
    <name type="scientific">Vibrio parahaemolyticus serotype O3:K6 (strain RIMD 2210633)</name>
    <dbReference type="NCBI Taxonomy" id="223926"/>
    <lineage>
        <taxon>Bacteria</taxon>
        <taxon>Pseudomonadati</taxon>
        <taxon>Pseudomonadota</taxon>
        <taxon>Gammaproteobacteria</taxon>
        <taxon>Vibrionales</taxon>
        <taxon>Vibrionaceae</taxon>
        <taxon>Vibrio</taxon>
    </lineage>
</organism>
<name>LEU3_VIBPA</name>
<proteinExistence type="inferred from homology"/>
<protein>
    <recommendedName>
        <fullName evidence="1">3-isopropylmalate dehydrogenase</fullName>
        <ecNumber evidence="1">1.1.1.85</ecNumber>
    </recommendedName>
    <alternativeName>
        <fullName evidence="1">3-IPM-DH</fullName>
    </alternativeName>
    <alternativeName>
        <fullName evidence="1">Beta-IPM dehydrogenase</fullName>
        <shortName evidence="1">IMDH</shortName>
    </alternativeName>
</protein>
<keyword id="KW-0028">Amino-acid biosynthesis</keyword>
<keyword id="KW-0100">Branched-chain amino acid biosynthesis</keyword>
<keyword id="KW-0963">Cytoplasm</keyword>
<keyword id="KW-0432">Leucine biosynthesis</keyword>
<keyword id="KW-0460">Magnesium</keyword>
<keyword id="KW-0464">Manganese</keyword>
<keyword id="KW-0479">Metal-binding</keyword>
<keyword id="KW-0520">NAD</keyword>
<keyword id="KW-0560">Oxidoreductase</keyword>